<comment type="function">
    <text evidence="1">Catalyzes the formation of 5-methyl-uridine at position 747 (m5U747) in 23S rRNA.</text>
</comment>
<comment type="catalytic activity">
    <reaction>
        <text>uridine(747) in 23S rRNA + S-adenosyl-L-methionine = 5-methyluridine(747) in 23S rRNA + S-adenosyl-L-homocysteine + H(+)</text>
        <dbReference type="Rhea" id="RHEA:42628"/>
        <dbReference type="Rhea" id="RHEA-COMP:10154"/>
        <dbReference type="Rhea" id="RHEA-COMP:10155"/>
        <dbReference type="ChEBI" id="CHEBI:15378"/>
        <dbReference type="ChEBI" id="CHEBI:57856"/>
        <dbReference type="ChEBI" id="CHEBI:59789"/>
        <dbReference type="ChEBI" id="CHEBI:65315"/>
        <dbReference type="ChEBI" id="CHEBI:74447"/>
        <dbReference type="EC" id="2.1.1.189"/>
    </reaction>
</comment>
<comment type="similarity">
    <text evidence="2">Belongs to the class I-like SAM-binding methyltransferase superfamily. RNA M5U methyltransferase family. RlmC subfamily.</text>
</comment>
<comment type="caution">
    <text evidence="3">Could be the product of a pseudogene. The N-terminus is much shorter than in related proteins.</text>
</comment>
<gene>
    <name type="primary">rlmC</name>
    <name type="synonym">rumB</name>
    <name type="ordered locus">HD_0478</name>
</gene>
<sequence>MRRALIFLASPHFFAPNFFIFIYAKRISTPQIPLFIRPQGFFQTNPKVASQLYATVQQWVKILPINHLWDLFCGVGGFGLHCAKALQDQGKPVTLTGIEISAAAIESATQSAQKLALNNVTFASLDAAQFALKDRQQTPELVIVNPPRRGIGKDLAEFLNQLNIPYLIYSSCNAESMVKDFAYLTHYQLHRVQLFDMFPHTTHYETVTLLIRK</sequence>
<name>RLMC_HAEDU</name>
<dbReference type="EC" id="2.1.1.189"/>
<dbReference type="EMBL" id="AE017143">
    <property type="protein sequence ID" value="AAP95434.1"/>
    <property type="molecule type" value="Genomic_DNA"/>
</dbReference>
<dbReference type="SMR" id="Q7VNM5"/>
<dbReference type="STRING" id="233412.HD_0478"/>
<dbReference type="KEGG" id="hdu:HD_0478"/>
<dbReference type="eggNOG" id="COG2265">
    <property type="taxonomic scope" value="Bacteria"/>
</dbReference>
<dbReference type="HOGENOM" id="CLU_099436_0_0_6"/>
<dbReference type="OrthoDB" id="9804590at2"/>
<dbReference type="Proteomes" id="UP000001022">
    <property type="component" value="Chromosome"/>
</dbReference>
<dbReference type="GO" id="GO:0070041">
    <property type="term" value="F:rRNA (uridine-C5-)-methyltransferase activity"/>
    <property type="evidence" value="ECO:0007669"/>
    <property type="project" value="TreeGrafter"/>
</dbReference>
<dbReference type="GO" id="GO:0070475">
    <property type="term" value="P:rRNA base methylation"/>
    <property type="evidence" value="ECO:0007669"/>
    <property type="project" value="TreeGrafter"/>
</dbReference>
<dbReference type="CDD" id="cd02440">
    <property type="entry name" value="AdoMet_MTases"/>
    <property type="match status" value="1"/>
</dbReference>
<dbReference type="Gene3D" id="3.40.50.150">
    <property type="entry name" value="Vaccinia Virus protein VP39"/>
    <property type="match status" value="1"/>
</dbReference>
<dbReference type="InterPro" id="IPR030390">
    <property type="entry name" value="MeTrfase_TrmA_AS"/>
</dbReference>
<dbReference type="InterPro" id="IPR030391">
    <property type="entry name" value="MeTrfase_TrmA_CS"/>
</dbReference>
<dbReference type="InterPro" id="IPR029063">
    <property type="entry name" value="SAM-dependent_MTases_sf"/>
</dbReference>
<dbReference type="InterPro" id="IPR010280">
    <property type="entry name" value="U5_MeTrfase_fam"/>
</dbReference>
<dbReference type="PANTHER" id="PTHR11061">
    <property type="entry name" value="RNA M5U METHYLTRANSFERASE"/>
    <property type="match status" value="1"/>
</dbReference>
<dbReference type="PANTHER" id="PTHR11061:SF30">
    <property type="entry name" value="TRNA (URACIL(54)-C(5))-METHYLTRANSFERASE"/>
    <property type="match status" value="1"/>
</dbReference>
<dbReference type="Pfam" id="PF05958">
    <property type="entry name" value="tRNA_U5-meth_tr"/>
    <property type="match status" value="1"/>
</dbReference>
<dbReference type="SUPFAM" id="SSF53335">
    <property type="entry name" value="S-adenosyl-L-methionine-dependent methyltransferases"/>
    <property type="match status" value="1"/>
</dbReference>
<dbReference type="PROSITE" id="PS51687">
    <property type="entry name" value="SAM_MT_RNA_M5U"/>
    <property type="match status" value="1"/>
</dbReference>
<dbReference type="PROSITE" id="PS01230">
    <property type="entry name" value="TRMA_1"/>
    <property type="match status" value="1"/>
</dbReference>
<dbReference type="PROSITE" id="PS01231">
    <property type="entry name" value="TRMA_2"/>
    <property type="match status" value="1"/>
</dbReference>
<accession>Q7VNM5</accession>
<protein>
    <recommendedName>
        <fullName>Putative 23S rRNA (uracil(747)-C(5))-methyltransferase RlmC</fullName>
        <ecNumber>2.1.1.189</ecNumber>
    </recommendedName>
    <alternativeName>
        <fullName>23S rRNA(m5U747)-methyltransferase</fullName>
    </alternativeName>
</protein>
<organism>
    <name type="scientific">Haemophilus ducreyi (strain 35000HP / ATCC 700724)</name>
    <dbReference type="NCBI Taxonomy" id="233412"/>
    <lineage>
        <taxon>Bacteria</taxon>
        <taxon>Pseudomonadati</taxon>
        <taxon>Pseudomonadota</taxon>
        <taxon>Gammaproteobacteria</taxon>
        <taxon>Pasteurellales</taxon>
        <taxon>Pasteurellaceae</taxon>
        <taxon>Haemophilus</taxon>
    </lineage>
</organism>
<feature type="chain" id="PRO_0000161929" description="Putative 23S rRNA (uracil(747)-C(5))-methyltransferase RlmC">
    <location>
        <begin position="1"/>
        <end position="213"/>
    </location>
</feature>
<feature type="active site" description="Nucleophile" evidence="2">
    <location>
        <position position="172"/>
    </location>
</feature>
<feature type="binding site" evidence="2">
    <location>
        <position position="43"/>
    </location>
    <ligand>
        <name>S-adenosyl-L-methionine</name>
        <dbReference type="ChEBI" id="CHEBI:59789"/>
    </ligand>
</feature>
<feature type="binding site" evidence="2">
    <location>
        <position position="72"/>
    </location>
    <ligand>
        <name>S-adenosyl-L-methionine</name>
        <dbReference type="ChEBI" id="CHEBI:59789"/>
    </ligand>
</feature>
<feature type="binding site" evidence="2">
    <location>
        <position position="99"/>
    </location>
    <ligand>
        <name>S-adenosyl-L-methionine</name>
        <dbReference type="ChEBI" id="CHEBI:59789"/>
    </ligand>
</feature>
<feature type="binding site" evidence="2">
    <location>
        <position position="145"/>
    </location>
    <ligand>
        <name>S-adenosyl-L-methionine</name>
        <dbReference type="ChEBI" id="CHEBI:59789"/>
    </ligand>
</feature>
<keyword id="KW-0489">Methyltransferase</keyword>
<keyword id="KW-1185">Reference proteome</keyword>
<keyword id="KW-0698">rRNA processing</keyword>
<keyword id="KW-0949">S-adenosyl-L-methionine</keyword>
<keyword id="KW-0808">Transferase</keyword>
<evidence type="ECO:0000250" key="1"/>
<evidence type="ECO:0000255" key="2">
    <source>
        <dbReference type="PROSITE-ProRule" id="PRU01024"/>
    </source>
</evidence>
<evidence type="ECO:0000305" key="3"/>
<reference key="1">
    <citation type="submission" date="2003-06" db="EMBL/GenBank/DDBJ databases">
        <title>The complete genome sequence of Haemophilus ducreyi.</title>
        <authorList>
            <person name="Munson R.S. Jr."/>
            <person name="Ray W.C."/>
            <person name="Mahairas G."/>
            <person name="Sabo P."/>
            <person name="Mungur R."/>
            <person name="Johnson L."/>
            <person name="Nguyen D."/>
            <person name="Wang J."/>
            <person name="Forst C."/>
            <person name="Hood L."/>
        </authorList>
    </citation>
    <scope>NUCLEOTIDE SEQUENCE [LARGE SCALE GENOMIC DNA]</scope>
    <source>
        <strain>35000HP / ATCC 700724</strain>
    </source>
</reference>
<proteinExistence type="uncertain"/>